<feature type="signal peptide" evidence="2">
    <location>
        <begin position="1"/>
        <end position="29"/>
    </location>
</feature>
<feature type="chain" id="PRO_0000379598" description="Defensin-like protein 11">
    <location>
        <begin position="30"/>
        <end position="85"/>
    </location>
</feature>
<feature type="disulfide bond" evidence="1">
    <location>
        <begin position="32"/>
        <end position="84"/>
    </location>
</feature>
<feature type="disulfide bond" evidence="1">
    <location>
        <begin position="44"/>
        <end position="68"/>
    </location>
</feature>
<feature type="disulfide bond" evidence="1">
    <location>
        <begin position="54"/>
        <end position="75"/>
    </location>
</feature>
<feature type="disulfide bond" evidence="1">
    <location>
        <begin position="58"/>
        <end position="77"/>
    </location>
</feature>
<dbReference type="EMBL" id="AL138648">
    <property type="protein sequence ID" value="CAB86437.1"/>
    <property type="molecule type" value="Genomic_DNA"/>
</dbReference>
<dbReference type="EMBL" id="AL163818">
    <property type="status" value="NOT_ANNOTATED_CDS"/>
    <property type="molecule type" value="Genomic_DNA"/>
</dbReference>
<dbReference type="EMBL" id="CP002686">
    <property type="protein sequence ID" value="AEE80471.1"/>
    <property type="molecule type" value="Genomic_DNA"/>
</dbReference>
<dbReference type="EMBL" id="DQ446785">
    <property type="protein sequence ID" value="ABE66035.1"/>
    <property type="molecule type" value="mRNA"/>
</dbReference>
<dbReference type="EMBL" id="DQ653167">
    <property type="protein sequence ID" value="ABK28615.1"/>
    <property type="status" value="ALT_SEQ"/>
    <property type="molecule type" value="mRNA"/>
</dbReference>
<dbReference type="PIR" id="T48125">
    <property type="entry name" value="T48125"/>
</dbReference>
<dbReference type="RefSeq" id="NP_191895.1">
    <property type="nucleotide sequence ID" value="NM_116201.2"/>
</dbReference>
<dbReference type="SMR" id="Q9M1V4"/>
<dbReference type="STRING" id="3702.Q9M1V4"/>
<dbReference type="PaxDb" id="3702-AT3G63360.1"/>
<dbReference type="EnsemblPlants" id="AT3G63360.1">
    <property type="protein sequence ID" value="AT3G63360.1"/>
    <property type="gene ID" value="AT3G63360"/>
</dbReference>
<dbReference type="GeneID" id="825511"/>
<dbReference type="Gramene" id="AT3G63360.1">
    <property type="protein sequence ID" value="AT3G63360.1"/>
    <property type="gene ID" value="AT3G63360"/>
</dbReference>
<dbReference type="KEGG" id="ath:AT3G63360"/>
<dbReference type="Araport" id="AT3G63360"/>
<dbReference type="TAIR" id="AT3G63360"/>
<dbReference type="HOGENOM" id="CLU_2515737_0_0_1"/>
<dbReference type="InParanoid" id="Q9M1V4"/>
<dbReference type="OMA" id="HRCLCRN"/>
<dbReference type="PRO" id="PR:Q9M1V4"/>
<dbReference type="Proteomes" id="UP000006548">
    <property type="component" value="Chromosome 3"/>
</dbReference>
<dbReference type="ExpressionAtlas" id="Q9M1V4">
    <property type="expression patterns" value="baseline and differential"/>
</dbReference>
<dbReference type="GO" id="GO:0005576">
    <property type="term" value="C:extracellular region"/>
    <property type="evidence" value="ECO:0007669"/>
    <property type="project" value="UniProtKB-SubCell"/>
</dbReference>
<dbReference type="GO" id="GO:0050832">
    <property type="term" value="P:defense response to fungus"/>
    <property type="evidence" value="ECO:0007669"/>
    <property type="project" value="UniProtKB-KW"/>
</dbReference>
<dbReference type="GO" id="GO:0031640">
    <property type="term" value="P:killing of cells of another organism"/>
    <property type="evidence" value="ECO:0007669"/>
    <property type="project" value="UniProtKB-KW"/>
</dbReference>
<keyword id="KW-0929">Antimicrobial</keyword>
<keyword id="KW-1015">Disulfide bond</keyword>
<keyword id="KW-0295">Fungicide</keyword>
<keyword id="KW-0611">Plant defense</keyword>
<keyword id="KW-1185">Reference proteome</keyword>
<keyword id="KW-0964">Secreted</keyword>
<keyword id="KW-0732">Signal</keyword>
<organism>
    <name type="scientific">Arabidopsis thaliana</name>
    <name type="common">Mouse-ear cress</name>
    <dbReference type="NCBI Taxonomy" id="3702"/>
    <lineage>
        <taxon>Eukaryota</taxon>
        <taxon>Viridiplantae</taxon>
        <taxon>Streptophyta</taxon>
        <taxon>Embryophyta</taxon>
        <taxon>Tracheophyta</taxon>
        <taxon>Spermatophyta</taxon>
        <taxon>Magnoliopsida</taxon>
        <taxon>eudicotyledons</taxon>
        <taxon>Gunneridae</taxon>
        <taxon>Pentapetalae</taxon>
        <taxon>rosids</taxon>
        <taxon>malvids</taxon>
        <taxon>Brassicales</taxon>
        <taxon>Brassicaceae</taxon>
        <taxon>Camelineae</taxon>
        <taxon>Arabidopsis</taxon>
    </lineage>
</organism>
<name>DEF11_ARATH</name>
<proteinExistence type="inferred from homology"/>
<gene>
    <name type="ordered locus">At3g63360</name>
    <name type="ORF">F16M2_210</name>
    <name type="ORF">MAA21.5</name>
</gene>
<comment type="subcellular location">
    <subcellularLocation>
        <location evidence="1">Secreted</location>
    </subcellularLocation>
</comment>
<comment type="similarity">
    <text evidence="3">Belongs to the DEFL family.</text>
</comment>
<comment type="sequence caution" evidence="3">
    <conflict type="erroneous termination">
        <sequence resource="EMBL-CDS" id="ABK28615"/>
    </conflict>
    <text>Extended C-terminus.</text>
</comment>
<evidence type="ECO:0000250" key="1"/>
<evidence type="ECO:0000255" key="2"/>
<evidence type="ECO:0000305" key="3"/>
<accession>Q9M1V4</accession>
<accession>A0MF42</accession>
<protein>
    <recommendedName>
        <fullName>Defensin-like protein 11</fullName>
    </recommendedName>
</protein>
<sequence>MGKTISFSAIILVFLLVSTGLMKQGDAQAQKCEWECKLLPNFPCWLKGAGEGLCDNLCKYEGAISGVCVSDPHRCLCRNRKPGCS</sequence>
<reference key="1">
    <citation type="journal article" date="2000" name="Nature">
        <title>Sequence and analysis of chromosome 3 of the plant Arabidopsis thaliana.</title>
        <authorList>
            <person name="Salanoubat M."/>
            <person name="Lemcke K."/>
            <person name="Rieger M."/>
            <person name="Ansorge W."/>
            <person name="Unseld M."/>
            <person name="Fartmann B."/>
            <person name="Valle G."/>
            <person name="Bloecker H."/>
            <person name="Perez-Alonso M."/>
            <person name="Obermaier B."/>
            <person name="Delseny M."/>
            <person name="Boutry M."/>
            <person name="Grivell L.A."/>
            <person name="Mache R."/>
            <person name="Puigdomenech P."/>
            <person name="De Simone V."/>
            <person name="Choisne N."/>
            <person name="Artiguenave F."/>
            <person name="Robert C."/>
            <person name="Brottier P."/>
            <person name="Wincker P."/>
            <person name="Cattolico L."/>
            <person name="Weissenbach J."/>
            <person name="Saurin W."/>
            <person name="Quetier F."/>
            <person name="Schaefer M."/>
            <person name="Mueller-Auer S."/>
            <person name="Gabel C."/>
            <person name="Fuchs M."/>
            <person name="Benes V."/>
            <person name="Wurmbach E."/>
            <person name="Drzonek H."/>
            <person name="Erfle H."/>
            <person name="Jordan N."/>
            <person name="Bangert S."/>
            <person name="Wiedelmann R."/>
            <person name="Kranz H."/>
            <person name="Voss H."/>
            <person name="Holland R."/>
            <person name="Brandt P."/>
            <person name="Nyakatura G."/>
            <person name="Vezzi A."/>
            <person name="D'Angelo M."/>
            <person name="Pallavicini A."/>
            <person name="Toppo S."/>
            <person name="Simionati B."/>
            <person name="Conrad A."/>
            <person name="Hornischer K."/>
            <person name="Kauer G."/>
            <person name="Loehnert T.-H."/>
            <person name="Nordsiek G."/>
            <person name="Reichelt J."/>
            <person name="Scharfe M."/>
            <person name="Schoen O."/>
            <person name="Bargues M."/>
            <person name="Terol J."/>
            <person name="Climent J."/>
            <person name="Navarro P."/>
            <person name="Collado C."/>
            <person name="Perez-Perez A."/>
            <person name="Ottenwaelder B."/>
            <person name="Duchemin D."/>
            <person name="Cooke R."/>
            <person name="Laudie M."/>
            <person name="Berger-Llauro C."/>
            <person name="Purnelle B."/>
            <person name="Masuy D."/>
            <person name="de Haan M."/>
            <person name="Maarse A.C."/>
            <person name="Alcaraz J.-P."/>
            <person name="Cottet A."/>
            <person name="Casacuberta E."/>
            <person name="Monfort A."/>
            <person name="Argiriou A."/>
            <person name="Flores M."/>
            <person name="Liguori R."/>
            <person name="Vitale D."/>
            <person name="Mannhaupt G."/>
            <person name="Haase D."/>
            <person name="Schoof H."/>
            <person name="Rudd S."/>
            <person name="Zaccaria P."/>
            <person name="Mewes H.-W."/>
            <person name="Mayer K.F.X."/>
            <person name="Kaul S."/>
            <person name="Town C.D."/>
            <person name="Koo H.L."/>
            <person name="Tallon L.J."/>
            <person name="Jenkins J."/>
            <person name="Rooney T."/>
            <person name="Rizzo M."/>
            <person name="Walts A."/>
            <person name="Utterback T."/>
            <person name="Fujii C.Y."/>
            <person name="Shea T.P."/>
            <person name="Creasy T.H."/>
            <person name="Haas B."/>
            <person name="Maiti R."/>
            <person name="Wu D."/>
            <person name="Peterson J."/>
            <person name="Van Aken S."/>
            <person name="Pai G."/>
            <person name="Militscher J."/>
            <person name="Sellers P."/>
            <person name="Gill J.E."/>
            <person name="Feldblyum T.V."/>
            <person name="Preuss D."/>
            <person name="Lin X."/>
            <person name="Nierman W.C."/>
            <person name="Salzberg S.L."/>
            <person name="White O."/>
            <person name="Venter J.C."/>
            <person name="Fraser C.M."/>
            <person name="Kaneko T."/>
            <person name="Nakamura Y."/>
            <person name="Sato S."/>
            <person name="Kato T."/>
            <person name="Asamizu E."/>
            <person name="Sasamoto S."/>
            <person name="Kimura T."/>
            <person name="Idesawa K."/>
            <person name="Kawashima K."/>
            <person name="Kishida Y."/>
            <person name="Kiyokawa C."/>
            <person name="Kohara M."/>
            <person name="Matsumoto M."/>
            <person name="Matsuno A."/>
            <person name="Muraki A."/>
            <person name="Nakayama S."/>
            <person name="Nakazaki N."/>
            <person name="Shinpo S."/>
            <person name="Takeuchi C."/>
            <person name="Wada T."/>
            <person name="Watanabe A."/>
            <person name="Yamada M."/>
            <person name="Yasuda M."/>
            <person name="Tabata S."/>
        </authorList>
    </citation>
    <scope>NUCLEOTIDE SEQUENCE [LARGE SCALE GENOMIC DNA]</scope>
    <source>
        <strain>cv. Columbia</strain>
    </source>
</reference>
<reference key="2">
    <citation type="journal article" date="2017" name="Plant J.">
        <title>Araport11: a complete reannotation of the Arabidopsis thaliana reference genome.</title>
        <authorList>
            <person name="Cheng C.Y."/>
            <person name="Krishnakumar V."/>
            <person name="Chan A.P."/>
            <person name="Thibaud-Nissen F."/>
            <person name="Schobel S."/>
            <person name="Town C.D."/>
        </authorList>
    </citation>
    <scope>GENOME REANNOTATION</scope>
    <source>
        <strain>cv. Columbia</strain>
    </source>
</reference>
<reference key="3">
    <citation type="journal article" date="2006" name="Plant Biotechnol. J.">
        <title>Simultaneous high-throughput recombinational cloning of open reading frames in closed and open configurations.</title>
        <authorList>
            <person name="Underwood B.A."/>
            <person name="Vanderhaeghen R."/>
            <person name="Whitford R."/>
            <person name="Town C.D."/>
            <person name="Hilson P."/>
        </authorList>
    </citation>
    <scope>NUCLEOTIDE SEQUENCE [LARGE SCALE MRNA]</scope>
    <source>
        <strain>cv. Columbia</strain>
    </source>
</reference>
<reference key="4">
    <citation type="journal article" date="2005" name="Plant Physiol.">
        <title>Genome organization of more than 300 defensin-like genes in Arabidopsis.</title>
        <authorList>
            <person name="Silverstein K.A.T."/>
            <person name="Graham M.A."/>
            <person name="Paape T.D."/>
            <person name="VandenBosch K.A."/>
        </authorList>
    </citation>
    <scope>GENE FAMILY</scope>
</reference>